<evidence type="ECO:0000305" key="1"/>
<sequence length="38" mass="4421">MKVRPSVKPICEYCKVIRRNGRVMVICPANPKHKQRQG</sequence>
<protein>
    <recommendedName>
        <fullName evidence="1">Large ribosomal subunit protein bL36</fullName>
    </recommendedName>
    <alternativeName>
        <fullName>50S ribosomal protein L36</fullName>
    </alternativeName>
</protein>
<keyword id="KW-1185">Reference proteome</keyword>
<keyword id="KW-0687">Ribonucleoprotein</keyword>
<keyword id="KW-0689">Ribosomal protein</keyword>
<reference key="1">
    <citation type="journal article" date="2001" name="J. Bacteriol.">
        <title>Genome of the bacterium Streptococcus pneumoniae strain R6.</title>
        <authorList>
            <person name="Hoskins J."/>
            <person name="Alborn W.E. Jr."/>
            <person name="Arnold J."/>
            <person name="Blaszczak L.C."/>
            <person name="Burgett S."/>
            <person name="DeHoff B.S."/>
            <person name="Estrem S.T."/>
            <person name="Fritz L."/>
            <person name="Fu D.-J."/>
            <person name="Fuller W."/>
            <person name="Geringer C."/>
            <person name="Gilmour R."/>
            <person name="Glass J.S."/>
            <person name="Khoja H."/>
            <person name="Kraft A.R."/>
            <person name="Lagace R.E."/>
            <person name="LeBlanc D.J."/>
            <person name="Lee L.N."/>
            <person name="Lefkowitz E.J."/>
            <person name="Lu J."/>
            <person name="Matsushima P."/>
            <person name="McAhren S.M."/>
            <person name="McHenney M."/>
            <person name="McLeaster K."/>
            <person name="Mundy C.W."/>
            <person name="Nicas T.I."/>
            <person name="Norris F.H."/>
            <person name="O'Gara M."/>
            <person name="Peery R.B."/>
            <person name="Robertson G.T."/>
            <person name="Rockey P."/>
            <person name="Sun P.-M."/>
            <person name="Winkler M.E."/>
            <person name="Yang Y."/>
            <person name="Young-Bellido M."/>
            <person name="Zhao G."/>
            <person name="Zook C.A."/>
            <person name="Baltz R.H."/>
            <person name="Jaskunas S.R."/>
            <person name="Rosteck P.R. Jr."/>
            <person name="Skatrud P.L."/>
            <person name="Glass J.I."/>
        </authorList>
    </citation>
    <scope>NUCLEOTIDE SEQUENCE [LARGE SCALE GENOMIC DNA]</scope>
    <source>
        <strain>ATCC BAA-255 / R6</strain>
    </source>
</reference>
<dbReference type="EMBL" id="AE007317">
    <property type="protein sequence ID" value="AAK99016.1"/>
    <property type="molecule type" value="Genomic_DNA"/>
</dbReference>
<dbReference type="PIR" id="D97898">
    <property type="entry name" value="D97898"/>
</dbReference>
<dbReference type="RefSeq" id="NP_357806.1">
    <property type="nucleotide sequence ID" value="NC_003098.1"/>
</dbReference>
<dbReference type="RefSeq" id="WP_001808836.1">
    <property type="nucleotide sequence ID" value="NC_003098.1"/>
</dbReference>
<dbReference type="SMR" id="P0A496"/>
<dbReference type="STRING" id="171101.spr0212"/>
<dbReference type="GeneID" id="93964224"/>
<dbReference type="KEGG" id="spr:spr0212"/>
<dbReference type="PATRIC" id="fig|171101.6.peg.244"/>
<dbReference type="eggNOG" id="COG0257">
    <property type="taxonomic scope" value="Bacteria"/>
</dbReference>
<dbReference type="HOGENOM" id="CLU_135723_6_2_9"/>
<dbReference type="PRO" id="PR:P0A496"/>
<dbReference type="Proteomes" id="UP000000586">
    <property type="component" value="Chromosome"/>
</dbReference>
<dbReference type="GO" id="GO:0005737">
    <property type="term" value="C:cytoplasm"/>
    <property type="evidence" value="ECO:0007669"/>
    <property type="project" value="UniProtKB-ARBA"/>
</dbReference>
<dbReference type="GO" id="GO:1990904">
    <property type="term" value="C:ribonucleoprotein complex"/>
    <property type="evidence" value="ECO:0007669"/>
    <property type="project" value="UniProtKB-KW"/>
</dbReference>
<dbReference type="GO" id="GO:0005840">
    <property type="term" value="C:ribosome"/>
    <property type="evidence" value="ECO:0007669"/>
    <property type="project" value="UniProtKB-KW"/>
</dbReference>
<dbReference type="GO" id="GO:0003735">
    <property type="term" value="F:structural constituent of ribosome"/>
    <property type="evidence" value="ECO:0007669"/>
    <property type="project" value="InterPro"/>
</dbReference>
<dbReference type="GO" id="GO:0006412">
    <property type="term" value="P:translation"/>
    <property type="evidence" value="ECO:0007669"/>
    <property type="project" value="UniProtKB-UniRule"/>
</dbReference>
<dbReference type="HAMAP" id="MF_00251">
    <property type="entry name" value="Ribosomal_bL36"/>
    <property type="match status" value="1"/>
</dbReference>
<dbReference type="InterPro" id="IPR000473">
    <property type="entry name" value="Ribosomal_bL36"/>
</dbReference>
<dbReference type="InterPro" id="IPR035977">
    <property type="entry name" value="Ribosomal_bL36_sp"/>
</dbReference>
<dbReference type="NCBIfam" id="TIGR01022">
    <property type="entry name" value="rpmJ_bact"/>
    <property type="match status" value="1"/>
</dbReference>
<dbReference type="PANTHER" id="PTHR42888">
    <property type="entry name" value="50S RIBOSOMAL PROTEIN L36, CHLOROPLASTIC"/>
    <property type="match status" value="1"/>
</dbReference>
<dbReference type="PANTHER" id="PTHR42888:SF1">
    <property type="entry name" value="LARGE RIBOSOMAL SUBUNIT PROTEIN BL36C"/>
    <property type="match status" value="1"/>
</dbReference>
<dbReference type="Pfam" id="PF00444">
    <property type="entry name" value="Ribosomal_L36"/>
    <property type="match status" value="1"/>
</dbReference>
<dbReference type="SUPFAM" id="SSF57840">
    <property type="entry name" value="Ribosomal protein L36"/>
    <property type="match status" value="1"/>
</dbReference>
<dbReference type="PROSITE" id="PS00828">
    <property type="entry name" value="RIBOSOMAL_L36"/>
    <property type="match status" value="1"/>
</dbReference>
<feature type="chain" id="PRO_0000126269" description="Large ribosomal subunit protein bL36">
    <location>
        <begin position="1"/>
        <end position="38"/>
    </location>
</feature>
<name>RL36_STRR6</name>
<organism>
    <name type="scientific">Streptococcus pneumoniae (strain ATCC BAA-255 / R6)</name>
    <dbReference type="NCBI Taxonomy" id="171101"/>
    <lineage>
        <taxon>Bacteria</taxon>
        <taxon>Bacillati</taxon>
        <taxon>Bacillota</taxon>
        <taxon>Bacilli</taxon>
        <taxon>Lactobacillales</taxon>
        <taxon>Streptococcaceae</taxon>
        <taxon>Streptococcus</taxon>
    </lineage>
</organism>
<gene>
    <name type="primary">rpmJ</name>
    <name type="ordered locus">spr0212</name>
</gene>
<comment type="similarity">
    <text evidence="1">Belongs to the bacterial ribosomal protein bL36 family.</text>
</comment>
<accession>P0A496</accession>
<accession>P27146</accession>
<proteinExistence type="inferred from homology"/>